<protein>
    <recommendedName>
        <fullName>Histone H2A.Z</fullName>
    </recommendedName>
    <alternativeName>
        <fullName>hv1</fullName>
    </alternativeName>
</protein>
<feature type="initiator methionine" description="Removed" evidence="3">
    <location>
        <position position="1"/>
    </location>
</feature>
<feature type="chain" id="PRO_0000055311" description="Histone H2A.Z">
    <location>
        <begin position="2"/>
        <end position="146"/>
    </location>
</feature>
<feature type="region of interest" description="Disordered" evidence="1">
    <location>
        <begin position="1"/>
        <end position="31"/>
    </location>
</feature>
<feature type="compositionally biased region" description="Gly residues" evidence="1">
    <location>
        <begin position="1"/>
        <end position="19"/>
    </location>
</feature>
<feature type="modified residue" description="N6-acetyllysine" evidence="2 3">
    <location>
        <position position="5"/>
    </location>
</feature>
<feature type="modified residue" description="N6-acetyllysine" evidence="2 3">
    <location>
        <position position="8"/>
    </location>
</feature>
<feature type="modified residue" description="N6-acetyllysine" evidence="2 3">
    <location>
        <position position="11"/>
    </location>
</feature>
<feature type="modified residue" description="N6-acetyllysine" evidence="2 3">
    <location>
        <position position="14"/>
    </location>
</feature>
<feature type="modified residue" description="N6-acetyllysine" evidence="2 3">
    <location>
        <position position="17"/>
    </location>
</feature>
<feature type="modified residue" description="N6-acetyllysine" evidence="2 3">
    <location>
        <position position="22"/>
    </location>
</feature>
<comment type="function">
    <text evidence="6">Variant histone H2A which replaces conventional H2A in a subset of nucleosomes, preferentially in transcriptionally active chromatin. Nucleosomes wrap and compact DNA into chromatin, limiting DNA accessibility to the cellular machineries which require DNA as a template. Histones thereby play a central role in transcription regulation, DNA repair, DNA replication and chromosomal stability. DNA accessibility is regulated via a complex set of post-translational modifications of histones, also called histone code, and nucleosome remodeling. Essential for vegetative growth.</text>
</comment>
<comment type="subunit">
    <text>The nucleosome is a histone octamer containing two molecules each of H2A, H2B, H3 and H4 assembled in one H3-H4 heterotetramer and two H2A-H2B heterodimers. The octamer wraps approximately 147 bp of DNA. H2A or its variant HTA3 forms a heterodimer with H2B.</text>
</comment>
<comment type="subcellular location">
    <subcellularLocation>
        <location evidence="5">Nucleus</location>
    </subcellularLocation>
    <subcellularLocation>
        <location evidence="5">Chromosome</location>
    </subcellularLocation>
    <text>Localizes to the large, transcriptionally active, somatic macronucleus (MAC) at all stages of the cell cycle. Usually absent from the small, transcriptionally inert, germ line micronucleus (MIC), it is shortly found in the MIC during an early stage of conjugation.</text>
</comment>
<comment type="PTM">
    <text evidence="3">Phosphorylated on the C-terminal half.</text>
</comment>
<comment type="PTM">
    <text evidence="2 3 4">Acetylation occurs almost exclusively in the MAC.</text>
</comment>
<comment type="similarity">
    <text evidence="7">Belongs to the histone H2A family.</text>
</comment>
<comment type="caution">
    <text evidence="7">To ensure consistency between histone entries, we follow the 'Brno' nomenclature for histone modifications, with positions referring to those used in the literature for the 'closest' model organism. Due to slight variations in histone sequences between organisms and to the presence of initiator methionine in UniProtKB/Swiss-Prot sequences, the actual positions of modified amino acids in the sequence generally differ. In this entry the following conventions are used: H2A.ZK4ac = acetylated Lys-5; H2A.ZK7ac = acetylated Lys-8; H2A.ZK10ac = acetylated Lys-11; H2A.ZK13ac = acetylated Lys-14; H2A.ZK16ac = acetylated Lys-17; H2A.ZK21ac = acetylated Lys-22.</text>
</comment>
<accession>P08992</accession>
<organism>
    <name type="scientific">Tetrahymena thermophila (strain SB210)</name>
    <dbReference type="NCBI Taxonomy" id="312017"/>
    <lineage>
        <taxon>Eukaryota</taxon>
        <taxon>Sar</taxon>
        <taxon>Alveolata</taxon>
        <taxon>Ciliophora</taxon>
        <taxon>Intramacronucleata</taxon>
        <taxon>Oligohymenophorea</taxon>
        <taxon>Hymenostomatida</taxon>
        <taxon>Tetrahymenina</taxon>
        <taxon>Tetrahymenidae</taxon>
        <taxon>Tetrahymena</taxon>
    </lineage>
</organism>
<dbReference type="EMBL" id="X15548">
    <property type="protein sequence ID" value="CAA33554.1"/>
    <property type="molecule type" value="Genomic_DNA"/>
</dbReference>
<dbReference type="EMBL" id="GG662793">
    <property type="protein sequence ID" value="EAR90860.2"/>
    <property type="molecule type" value="Genomic_DNA"/>
</dbReference>
<dbReference type="EMBL" id="X06725">
    <property type="protein sequence ID" value="CAA29903.1"/>
    <property type="molecule type" value="mRNA"/>
</dbReference>
<dbReference type="PIR" id="S08210">
    <property type="entry name" value="S08210"/>
</dbReference>
<dbReference type="RefSeq" id="XP_001011105.2">
    <property type="nucleotide sequence ID" value="XM_001011105.3"/>
</dbReference>
<dbReference type="SMR" id="P08992"/>
<dbReference type="FunCoup" id="P08992">
    <property type="interactions" value="395"/>
</dbReference>
<dbReference type="STRING" id="312017.P08992"/>
<dbReference type="iPTMnet" id="P08992"/>
<dbReference type="EnsemblProtists" id="EAR90860">
    <property type="protein sequence ID" value="EAR90860"/>
    <property type="gene ID" value="TTHERM_00143660"/>
</dbReference>
<dbReference type="GeneID" id="7827530"/>
<dbReference type="KEGG" id="tet:TTHERM_00143660"/>
<dbReference type="eggNOG" id="KOG1757">
    <property type="taxonomic scope" value="Eukaryota"/>
</dbReference>
<dbReference type="HOGENOM" id="CLU_062828_2_1_1"/>
<dbReference type="InParanoid" id="P08992"/>
<dbReference type="OMA" id="MNKKGAP"/>
<dbReference type="OrthoDB" id="9421954at2759"/>
<dbReference type="Proteomes" id="UP000009168">
    <property type="component" value="Unassembled WGS sequence"/>
</dbReference>
<dbReference type="GO" id="GO:0000786">
    <property type="term" value="C:nucleosome"/>
    <property type="evidence" value="ECO:0007669"/>
    <property type="project" value="UniProtKB-KW"/>
</dbReference>
<dbReference type="GO" id="GO:0005634">
    <property type="term" value="C:nucleus"/>
    <property type="evidence" value="ECO:0007669"/>
    <property type="project" value="UniProtKB-SubCell"/>
</dbReference>
<dbReference type="GO" id="GO:0003677">
    <property type="term" value="F:DNA binding"/>
    <property type="evidence" value="ECO:0007669"/>
    <property type="project" value="UniProtKB-KW"/>
</dbReference>
<dbReference type="GO" id="GO:0046982">
    <property type="term" value="F:protein heterodimerization activity"/>
    <property type="evidence" value="ECO:0007669"/>
    <property type="project" value="InterPro"/>
</dbReference>
<dbReference type="GO" id="GO:0030527">
    <property type="term" value="F:structural constituent of chromatin"/>
    <property type="evidence" value="ECO:0007669"/>
    <property type="project" value="InterPro"/>
</dbReference>
<dbReference type="CDD" id="cd00074">
    <property type="entry name" value="HFD_H2A"/>
    <property type="match status" value="1"/>
</dbReference>
<dbReference type="FunFam" id="1.10.20.10:FF:000005">
    <property type="entry name" value="Histone H2A"/>
    <property type="match status" value="1"/>
</dbReference>
<dbReference type="Gene3D" id="1.10.20.10">
    <property type="entry name" value="Histone, subunit A"/>
    <property type="match status" value="1"/>
</dbReference>
<dbReference type="InterPro" id="IPR009072">
    <property type="entry name" value="Histone-fold"/>
</dbReference>
<dbReference type="InterPro" id="IPR002119">
    <property type="entry name" value="Histone_H2A"/>
</dbReference>
<dbReference type="InterPro" id="IPR007125">
    <property type="entry name" value="Histone_H2A/H2B/H3"/>
</dbReference>
<dbReference type="InterPro" id="IPR032454">
    <property type="entry name" value="Histone_H2A_C"/>
</dbReference>
<dbReference type="InterPro" id="IPR032458">
    <property type="entry name" value="Histone_H2A_CS"/>
</dbReference>
<dbReference type="PANTHER" id="PTHR23430">
    <property type="entry name" value="HISTONE H2A"/>
    <property type="match status" value="1"/>
</dbReference>
<dbReference type="Pfam" id="PF00125">
    <property type="entry name" value="Histone"/>
    <property type="match status" value="1"/>
</dbReference>
<dbReference type="Pfam" id="PF16211">
    <property type="entry name" value="Histone_H2A_C"/>
    <property type="match status" value="1"/>
</dbReference>
<dbReference type="PRINTS" id="PR00620">
    <property type="entry name" value="HISTONEH2A"/>
</dbReference>
<dbReference type="SMART" id="SM00414">
    <property type="entry name" value="H2A"/>
    <property type="match status" value="1"/>
</dbReference>
<dbReference type="SUPFAM" id="SSF47113">
    <property type="entry name" value="Histone-fold"/>
    <property type="match status" value="1"/>
</dbReference>
<dbReference type="PROSITE" id="PS00046">
    <property type="entry name" value="HISTONE_H2A"/>
    <property type="match status" value="1"/>
</dbReference>
<evidence type="ECO:0000256" key="1">
    <source>
        <dbReference type="SAM" id="MobiDB-lite"/>
    </source>
</evidence>
<evidence type="ECO:0000269" key="2">
    <source>
    </source>
</evidence>
<evidence type="ECO:0000269" key="3">
    <source>
    </source>
</evidence>
<evidence type="ECO:0000269" key="4">
    <source>
    </source>
</evidence>
<evidence type="ECO:0000269" key="5">
    <source>
    </source>
</evidence>
<evidence type="ECO:0000269" key="6">
    <source>
    </source>
</evidence>
<evidence type="ECO:0000305" key="7"/>
<proteinExistence type="evidence at protein level"/>
<reference key="1">
    <citation type="journal article" date="1990" name="J. Mol. Evol.">
        <title>Conservation of intron position indicates separation of major and variant H2As is an early event in the evolution of eukaryotes.</title>
        <authorList>
            <person name="van Daal A."/>
            <person name="White E.M."/>
            <person name="Elgin S.C.R."/>
            <person name="Gorovsky M.A."/>
        </authorList>
    </citation>
    <scope>NUCLEOTIDE SEQUENCE [GENOMIC DNA]</scope>
</reference>
<reference key="2">
    <citation type="journal article" date="2006" name="PLoS Biol.">
        <title>Macronuclear genome sequence of the ciliate Tetrahymena thermophila, a model eukaryote.</title>
        <authorList>
            <person name="Eisen J.A."/>
            <person name="Coyne R.S."/>
            <person name="Wu M."/>
            <person name="Wu D."/>
            <person name="Thiagarajan M."/>
            <person name="Wortman J.R."/>
            <person name="Badger J.H."/>
            <person name="Ren Q."/>
            <person name="Amedeo P."/>
            <person name="Jones K.M."/>
            <person name="Tallon L.J."/>
            <person name="Delcher A.L."/>
            <person name="Salzberg S.L."/>
            <person name="Silva J.C."/>
            <person name="Haas B.J."/>
            <person name="Majoros W.H."/>
            <person name="Farzad M."/>
            <person name="Carlton J.M."/>
            <person name="Smith R.K. Jr."/>
            <person name="Garg J."/>
            <person name="Pearlman R.E."/>
            <person name="Karrer K.M."/>
            <person name="Sun L."/>
            <person name="Manning G."/>
            <person name="Elde N.C."/>
            <person name="Turkewitz A.P."/>
            <person name="Asai D.J."/>
            <person name="Wilkes D.E."/>
            <person name="Wang Y."/>
            <person name="Cai H."/>
            <person name="Collins K."/>
            <person name="Stewart B.A."/>
            <person name="Lee S.R."/>
            <person name="Wilamowska K."/>
            <person name="Weinberg Z."/>
            <person name="Ruzzo W.L."/>
            <person name="Wloga D."/>
            <person name="Gaertig J."/>
            <person name="Frankel J."/>
            <person name="Tsao C.-C."/>
            <person name="Gorovsky M.A."/>
            <person name="Keeling P.J."/>
            <person name="Waller R.F."/>
            <person name="Patron N.J."/>
            <person name="Cherry J.M."/>
            <person name="Stover N.A."/>
            <person name="Krieger C.J."/>
            <person name="del Toro C."/>
            <person name="Ryder H.F."/>
            <person name="Williamson S.C."/>
            <person name="Barbeau R.A."/>
            <person name="Hamilton E.P."/>
            <person name="Orias E."/>
        </authorList>
    </citation>
    <scope>NUCLEOTIDE SEQUENCE [LARGE SCALE GENOMIC DNA]</scope>
    <source>
        <strain>SB210</strain>
    </source>
</reference>
<reference key="3">
    <citation type="journal article" date="1986" name="J. Biol. Chem.">
        <title>hv1 is an evolutionarily conserved H2A variant that is preferentially associated with active genes.</title>
        <authorList>
            <person name="Allis C.D."/>
            <person name="Richman R."/>
            <person name="Gorovsky M.A."/>
            <person name="Ziegler Y.S."/>
            <person name="Touchstone B."/>
            <person name="Bradley W.A."/>
            <person name="Cook R.G."/>
        </authorList>
    </citation>
    <scope>PROTEIN SEQUENCE OF 2-62 AND 79-107</scope>
    <scope>ACETYLATION AT LYS-5; LYS-8; LYS-11; LYS-14; LYS-17 AND LYS-22</scope>
    <scope>PHOSPHORYLATION</scope>
</reference>
<reference key="4">
    <citation type="journal article" date="1988" name="Nucleic Acids Res.">
        <title>Sequence and properties of the message encoding Tetrahymena hv1, a highly evolutionarily conserved histone H2A variant that is associated with active genes.</title>
        <authorList>
            <person name="White E.M."/>
            <person name="Shapiro D.L."/>
            <person name="Allis C.D."/>
            <person name="Gorovsky M.A."/>
        </authorList>
    </citation>
    <scope>NUCLEOTIDE SEQUENCE [MRNA] OF 9-146</scope>
    <source>
        <strain>CU428</strain>
    </source>
</reference>
<reference key="5">
    <citation type="journal article" date="1982" name="J. Biol. Chem.">
        <title>Regulation of histone acetylation in Tetrahymena macro- and micronuclei.</title>
        <authorList>
            <person name="Vavra K.J."/>
            <person name="Allis C.D."/>
            <person name="Gorovsky M.A."/>
        </authorList>
    </citation>
    <scope>ACETYLATION</scope>
    <source>
        <strain>B</strain>
    </source>
</reference>
<reference key="6">
    <citation type="journal article" date="1993" name="Genes Dev.">
        <title>Temporal and spatial association of histone H2A variant hv1 with transcriptionally competent chromatin during nuclear development in Tetrahymena thermophila.</title>
        <authorList>
            <person name="Stargell L.A."/>
            <person name="Bowen J."/>
            <person name="Dadd C.A."/>
            <person name="Dedon P.C."/>
            <person name="Davis M."/>
            <person name="Cook R.G."/>
            <person name="Allis C.D."/>
            <person name="Gorovsky M.A."/>
        </authorList>
    </citation>
    <scope>SUBCELLULAR LOCATION</scope>
    <source>
        <strain>B2086</strain>
        <strain>CU428</strain>
    </source>
</reference>
<reference key="7">
    <citation type="journal article" date="1996" name="Mol. Cell. Biol.">
        <title>Essential and nonessential histone H2A variants in Tetrahymena thermophila.</title>
        <authorList>
            <person name="Liu X."/>
            <person name="Li B."/>
            <person name="Gorovsky M.A."/>
        </authorList>
    </citation>
    <scope>FUNCTION</scope>
    <source>
        <strain>B2086</strain>
        <strain>CU428</strain>
    </source>
</reference>
<reference key="8">
    <citation type="journal article" date="2001" name="Mol. Cell">
        <title>Histone H2A.Z acetylation modulates an essential charge patch.</title>
        <authorList>
            <person name="Ren Q."/>
            <person name="Gorovsky M.A."/>
        </authorList>
    </citation>
    <scope>ACETYLATION AT LYS-5; LYS-8; LYS-11; LYS-14; LYS-17 AND LYS-22</scope>
    <source>
        <strain>B2086</strain>
        <strain>CU427</strain>
        <strain>CU428</strain>
    </source>
</reference>
<name>H2AV_TETTS</name>
<keyword id="KW-0007">Acetylation</keyword>
<keyword id="KW-0158">Chromosome</keyword>
<keyword id="KW-0903">Direct protein sequencing</keyword>
<keyword id="KW-0238">DNA-binding</keyword>
<keyword id="KW-0544">Nucleosome core</keyword>
<keyword id="KW-0539">Nucleus</keyword>
<keyword id="KW-0597">Phosphoprotein</keyword>
<keyword id="KW-1185">Reference proteome</keyword>
<gene>
    <name type="primary">HTA3</name>
    <name type="synonym">HV1</name>
    <name type="ORF">TTHERM_00143660</name>
</gene>
<sequence length="146" mass="15315">MAGGKGGKGGKGGKGGKVGGAKNKKTPQSRSYKAGLQFPVGRIHRFLKGRVSAKNRVGATAAVYAAAILEYLTAEVLELAGNASKDFKVRRITPRHLLLAIRGDEELDILIKATIAGGGVIPHIHKALLGKHSTKNRSSAKTAEPR</sequence>